<organism>
    <name type="scientific">Staphylococcus carnosus (strain TM300)</name>
    <dbReference type="NCBI Taxonomy" id="396513"/>
    <lineage>
        <taxon>Bacteria</taxon>
        <taxon>Bacillati</taxon>
        <taxon>Bacillota</taxon>
        <taxon>Bacilli</taxon>
        <taxon>Bacillales</taxon>
        <taxon>Staphylococcaceae</taxon>
        <taxon>Staphylococcus</taxon>
    </lineage>
</organism>
<feature type="chain" id="PRO_0000133750" description="Large ribosomal subunit protein uL13">
    <location>
        <begin position="1"/>
        <end position="145"/>
    </location>
</feature>
<name>RL13_STACT</name>
<evidence type="ECO:0000255" key="1">
    <source>
        <dbReference type="HAMAP-Rule" id="MF_01366"/>
    </source>
</evidence>
<evidence type="ECO:0000305" key="2"/>
<sequence length="145" mass="16177">MRQTFMANESNIERKWYVIDAAGQTLGRLSSEVASILRGKHKATYTPHVDSGDYVIIINAGQIEMTGKKASDKVYYRHSNYPGGIKSITAGELREKNPERLLEISIKGMLPSSRLGEKQGKKLFVYGGAEHPHAAQQPENYELRG</sequence>
<comment type="function">
    <text evidence="1">This protein is one of the early assembly proteins of the 50S ribosomal subunit, although it is not seen to bind rRNA by itself. It is important during the early stages of 50S assembly.</text>
</comment>
<comment type="subunit">
    <text evidence="1">Part of the 50S ribosomal subunit.</text>
</comment>
<comment type="similarity">
    <text evidence="1">Belongs to the universal ribosomal protein uL13 family.</text>
</comment>
<gene>
    <name evidence="1" type="primary">rplM</name>
    <name type="ordered locus">Sca_1703</name>
</gene>
<proteinExistence type="inferred from homology"/>
<accession>Q00990</accession>
<accession>B9DM45</accession>
<dbReference type="EMBL" id="X63912">
    <property type="protein sequence ID" value="CAA45367.1"/>
    <property type="molecule type" value="Genomic_DNA"/>
</dbReference>
<dbReference type="EMBL" id="AM295250">
    <property type="protein sequence ID" value="CAL28609.1"/>
    <property type="molecule type" value="Genomic_DNA"/>
</dbReference>
<dbReference type="PIR" id="S23063">
    <property type="entry name" value="S23063"/>
</dbReference>
<dbReference type="RefSeq" id="WP_015900949.1">
    <property type="nucleotide sequence ID" value="NC_012121.1"/>
</dbReference>
<dbReference type="SMR" id="Q00990"/>
<dbReference type="GeneID" id="93794162"/>
<dbReference type="KEGG" id="sca:SCA_1703"/>
<dbReference type="eggNOG" id="COG0102">
    <property type="taxonomic scope" value="Bacteria"/>
</dbReference>
<dbReference type="HOGENOM" id="CLU_082184_2_2_9"/>
<dbReference type="OrthoDB" id="9801330at2"/>
<dbReference type="BioCyc" id="SCAR396513:SCA_RS08680-MONOMER"/>
<dbReference type="Proteomes" id="UP000000444">
    <property type="component" value="Chromosome"/>
</dbReference>
<dbReference type="GO" id="GO:0022625">
    <property type="term" value="C:cytosolic large ribosomal subunit"/>
    <property type="evidence" value="ECO:0007669"/>
    <property type="project" value="TreeGrafter"/>
</dbReference>
<dbReference type="GO" id="GO:0003729">
    <property type="term" value="F:mRNA binding"/>
    <property type="evidence" value="ECO:0007669"/>
    <property type="project" value="TreeGrafter"/>
</dbReference>
<dbReference type="GO" id="GO:0003735">
    <property type="term" value="F:structural constituent of ribosome"/>
    <property type="evidence" value="ECO:0007669"/>
    <property type="project" value="InterPro"/>
</dbReference>
<dbReference type="GO" id="GO:0017148">
    <property type="term" value="P:negative regulation of translation"/>
    <property type="evidence" value="ECO:0007669"/>
    <property type="project" value="TreeGrafter"/>
</dbReference>
<dbReference type="GO" id="GO:0006412">
    <property type="term" value="P:translation"/>
    <property type="evidence" value="ECO:0007669"/>
    <property type="project" value="UniProtKB-UniRule"/>
</dbReference>
<dbReference type="CDD" id="cd00392">
    <property type="entry name" value="Ribosomal_L13"/>
    <property type="match status" value="1"/>
</dbReference>
<dbReference type="FunFam" id="3.90.1180.10:FF:000001">
    <property type="entry name" value="50S ribosomal protein L13"/>
    <property type="match status" value="1"/>
</dbReference>
<dbReference type="Gene3D" id="3.90.1180.10">
    <property type="entry name" value="Ribosomal protein L13"/>
    <property type="match status" value="1"/>
</dbReference>
<dbReference type="HAMAP" id="MF_01366">
    <property type="entry name" value="Ribosomal_uL13"/>
    <property type="match status" value="1"/>
</dbReference>
<dbReference type="InterPro" id="IPR005822">
    <property type="entry name" value="Ribosomal_uL13"/>
</dbReference>
<dbReference type="InterPro" id="IPR005823">
    <property type="entry name" value="Ribosomal_uL13_bac-type"/>
</dbReference>
<dbReference type="InterPro" id="IPR023563">
    <property type="entry name" value="Ribosomal_uL13_CS"/>
</dbReference>
<dbReference type="InterPro" id="IPR036899">
    <property type="entry name" value="Ribosomal_uL13_sf"/>
</dbReference>
<dbReference type="NCBIfam" id="TIGR01066">
    <property type="entry name" value="rplM_bact"/>
    <property type="match status" value="1"/>
</dbReference>
<dbReference type="PANTHER" id="PTHR11545:SF2">
    <property type="entry name" value="LARGE RIBOSOMAL SUBUNIT PROTEIN UL13M"/>
    <property type="match status" value="1"/>
</dbReference>
<dbReference type="PANTHER" id="PTHR11545">
    <property type="entry name" value="RIBOSOMAL PROTEIN L13"/>
    <property type="match status" value="1"/>
</dbReference>
<dbReference type="Pfam" id="PF00572">
    <property type="entry name" value="Ribosomal_L13"/>
    <property type="match status" value="1"/>
</dbReference>
<dbReference type="PIRSF" id="PIRSF002181">
    <property type="entry name" value="Ribosomal_L13"/>
    <property type="match status" value="1"/>
</dbReference>
<dbReference type="SUPFAM" id="SSF52161">
    <property type="entry name" value="Ribosomal protein L13"/>
    <property type="match status" value="1"/>
</dbReference>
<dbReference type="PROSITE" id="PS00783">
    <property type="entry name" value="RIBOSOMAL_L13"/>
    <property type="match status" value="1"/>
</dbReference>
<reference key="1">
    <citation type="journal article" date="1991" name="FEMS Microbiol. Lett.">
        <title>Suppression of an Escherichia coli secA(ts) mutant by a gene cloned from Staphylococcus carnosus.</title>
        <authorList>
            <person name="Overhoff-Freundlieb B."/>
            <person name="Freudl R."/>
        </authorList>
    </citation>
    <scope>NUCLEOTIDE SEQUENCE [GENOMIC DNA]</scope>
</reference>
<reference key="2">
    <citation type="journal article" date="2009" name="Appl. Environ. Microbiol.">
        <title>Genome analysis of the meat starter culture bacterium Staphylococcus carnosus TM300.</title>
        <authorList>
            <person name="Rosenstein R."/>
            <person name="Nerz C."/>
            <person name="Biswas L."/>
            <person name="Resch A."/>
            <person name="Raddatz G."/>
            <person name="Schuster S.C."/>
            <person name="Goetz F."/>
        </authorList>
    </citation>
    <scope>NUCLEOTIDE SEQUENCE [LARGE SCALE GENOMIC DNA]</scope>
    <source>
        <strain>TM300</strain>
    </source>
</reference>
<protein>
    <recommendedName>
        <fullName evidence="1">Large ribosomal subunit protein uL13</fullName>
    </recommendedName>
    <alternativeName>
        <fullName evidence="2">50S ribosomal protein L13</fullName>
    </alternativeName>
</protein>
<keyword id="KW-1185">Reference proteome</keyword>
<keyword id="KW-0687">Ribonucleoprotein</keyword>
<keyword id="KW-0689">Ribosomal protein</keyword>